<feature type="chain" id="PRO_0000055745" description="Protein kinase C-like">
    <location>
        <begin position="1"/>
        <end position="1139"/>
    </location>
</feature>
<feature type="domain" description="REM-1 1" evidence="5">
    <location>
        <begin position="1"/>
        <end position="67"/>
    </location>
</feature>
<feature type="domain" description="REM-1 2" evidence="5">
    <location>
        <begin position="142"/>
        <end position="219"/>
    </location>
</feature>
<feature type="domain" description="C2" evidence="1">
    <location>
        <begin position="225"/>
        <end position="343"/>
    </location>
</feature>
<feature type="domain" description="Protein kinase" evidence="2">
    <location>
        <begin position="814"/>
        <end position="1073"/>
    </location>
</feature>
<feature type="domain" description="AGC-kinase C-terminal" evidence="4">
    <location>
        <begin position="1074"/>
        <end position="1139"/>
    </location>
</feature>
<feature type="zinc finger region" description="Phorbol-ester/DAG-type 1" evidence="3">
    <location>
        <begin position="454"/>
        <end position="502"/>
    </location>
</feature>
<feature type="zinc finger region" description="Phorbol-ester/DAG-type 2" evidence="3">
    <location>
        <begin position="522"/>
        <end position="572"/>
    </location>
</feature>
<feature type="region of interest" description="Disordered" evidence="7">
    <location>
        <begin position="72"/>
        <end position="132"/>
    </location>
</feature>
<feature type="region of interest" description="Disordered" evidence="7">
    <location>
        <begin position="349"/>
        <end position="404"/>
    </location>
</feature>
<feature type="region of interest" description="Disordered" evidence="7">
    <location>
        <begin position="590"/>
        <end position="637"/>
    </location>
</feature>
<feature type="region of interest" description="Disordered" evidence="7">
    <location>
        <begin position="649"/>
        <end position="668"/>
    </location>
</feature>
<feature type="region of interest" description="Disordered" evidence="7">
    <location>
        <begin position="679"/>
        <end position="804"/>
    </location>
</feature>
<feature type="compositionally biased region" description="Polar residues" evidence="7">
    <location>
        <begin position="358"/>
        <end position="368"/>
    </location>
</feature>
<feature type="compositionally biased region" description="Polar residues" evidence="7">
    <location>
        <begin position="594"/>
        <end position="614"/>
    </location>
</feature>
<feature type="compositionally biased region" description="Low complexity" evidence="7">
    <location>
        <begin position="615"/>
        <end position="629"/>
    </location>
</feature>
<feature type="compositionally biased region" description="Pro residues" evidence="7">
    <location>
        <begin position="723"/>
        <end position="734"/>
    </location>
</feature>
<feature type="compositionally biased region" description="Pro residues" evidence="7">
    <location>
        <begin position="743"/>
        <end position="760"/>
    </location>
</feature>
<feature type="compositionally biased region" description="Low complexity" evidence="7">
    <location>
        <begin position="761"/>
        <end position="793"/>
    </location>
</feature>
<feature type="active site" description="Proton acceptor" evidence="2 6">
    <location>
        <position position="939"/>
    </location>
</feature>
<feature type="binding site" evidence="2">
    <location>
        <begin position="820"/>
        <end position="828"/>
    </location>
    <ligand>
        <name>ATP</name>
        <dbReference type="ChEBI" id="CHEBI:30616"/>
    </ligand>
</feature>
<feature type="binding site" evidence="2">
    <location>
        <position position="843"/>
    </location>
    <ligand>
        <name>ATP</name>
        <dbReference type="ChEBI" id="CHEBI:30616"/>
    </ligand>
</feature>
<proteinExistence type="inferred from homology"/>
<keyword id="KW-0067">ATP-binding</keyword>
<keyword id="KW-0175">Coiled coil</keyword>
<keyword id="KW-0418">Kinase</keyword>
<keyword id="KW-0479">Metal-binding</keyword>
<keyword id="KW-0547">Nucleotide-binding</keyword>
<keyword id="KW-0597">Phosphoprotein</keyword>
<keyword id="KW-0677">Repeat</keyword>
<keyword id="KW-0723">Serine/threonine-protein kinase</keyword>
<keyword id="KW-0808">Transferase</keyword>
<keyword id="KW-0862">Zinc</keyword>
<keyword id="KW-0863">Zinc-finger</keyword>
<evidence type="ECO:0000255" key="1">
    <source>
        <dbReference type="PROSITE-ProRule" id="PRU00041"/>
    </source>
</evidence>
<evidence type="ECO:0000255" key="2">
    <source>
        <dbReference type="PROSITE-ProRule" id="PRU00159"/>
    </source>
</evidence>
<evidence type="ECO:0000255" key="3">
    <source>
        <dbReference type="PROSITE-ProRule" id="PRU00226"/>
    </source>
</evidence>
<evidence type="ECO:0000255" key="4">
    <source>
        <dbReference type="PROSITE-ProRule" id="PRU00618"/>
    </source>
</evidence>
<evidence type="ECO:0000255" key="5">
    <source>
        <dbReference type="PROSITE-ProRule" id="PRU01207"/>
    </source>
</evidence>
<evidence type="ECO:0000255" key="6">
    <source>
        <dbReference type="PROSITE-ProRule" id="PRU10027"/>
    </source>
</evidence>
<evidence type="ECO:0000256" key="7">
    <source>
        <dbReference type="SAM" id="MobiDB-lite"/>
    </source>
</evidence>
<evidence type="ECO:0000305" key="8"/>
<name>KPC1_HYPJE</name>
<protein>
    <recommendedName>
        <fullName>Protein kinase C-like</fullName>
        <ecNumber>2.7.11.13</ecNumber>
    </recommendedName>
</protein>
<gene>
    <name type="primary">pkc1</name>
</gene>
<sequence>MNEDEAIQNITKKIEREKALINAANAMRSQTNNEAVRSPLDSQMRDGRRNLQFFEEKLRDIQLRKVGQGVEGMSLGADDAGRPPPPPKDASSAAWGDQAAYGQQSQVGPPSDLAPPRHNFGAPGPGAASKARPNFTKLDLIKYDTPYLGPRIQHMLSQIQFKLNVEEQYLKGVEKMVQLYGMEGDRKSKADAAARRVESKQKILLLKQALKRYEELHVDMDSADAQDDDSINTPNLRKPLSGQLSIRVVAIKDVDHATTGRFARGPETFVAVKVEDTVMARTKVSRNDRWEAEYHNMEVDKANEIELTIYDKPGEHPMPIAMLWVRISDIVEEMRRKRIEAEMNSSGWVSADRMGSTGAPSQFPMSPTSGSFGGSPQAPGGGQGQAPGPFGDPAPQPQVVTGPIDGWFNLEPAGQIQLEFSFVKENRDKRQVDLGLGRKGAVRQRKEEVHEMFGHKFVQHQFYNIMPCALCGDFLKYSAGMQCEDCKYTCHNKCYPSVVTKCISKSNAETDPDEEKINHRIPHRFQPFSNVTANWCCHCGYILPFGKKNCRKCSECGLTSHAQCVHLVPDFCGMSMAVANQILEGIRVQKQRQQKTTSLSEKTLRSGATKSPTTAGHGSSASFSSAGAGSVPGTPSAEATEAARLMYNQTSPQRPGQPGRAPSDLSAAAAASAAMAAAQGRTGYDSGPQDPYGQGHYGAAGPAPQHHKYNPADYANVDQGFPAQPPAQQRPPQPQQQQQAPPAQMPPQQPPPQQPLPPQPGQQYQQQQPAAQKPQPQPPATAQGAAAGPPGSQRKALPSATDPGTGARIGLDHFNFLAVLGKGNFGKVMLAETKRSKRLFAIKVLKKEFIIENDEVESIKSEKRVFLIANRERHPFLTNLHACFQTETRVYFVMEYISGGDLMLHIQRGQFGTKRAQFYAAEVCLALKYFHENGVIYRDLKLDNIMLTLDGHIKIADYGLCKEDMWYGSTTSTFCGTPEFMAPEILLDKKYGRAVDWWAFGVLIYQMLLQQSPFRGEDEDEIYDAILADEPLYPIHMPRDSVSILQKLLTREPDQRLGSGPTDAQEVMSQPFFRNINWDDIYHKRVQPPFLPQIKSATDTSNFDSEFTSVTPVLTPVQSVLSQAMQEEFRGFSYTADLD</sequence>
<reference key="1">
    <citation type="journal article" date="1996" name="Mol. Gen. Genet.">
        <title>Cloning and characterisation of genes (pkc1 and pkcA) encoding protein kinase C homologues from Trichoderma reesei and Aspergillus niger.</title>
        <authorList>
            <person name="Morawetz R."/>
            <person name="Lendenfeld T."/>
            <person name="Mischak H."/>
            <person name="Muehlbauer M."/>
            <person name="Gruber F."/>
            <person name="Goodnight J."/>
            <person name="de Graaff L.H."/>
            <person name="Visser J."/>
            <person name="Mushinski J.F."/>
            <person name="Kubicek C.P."/>
        </authorList>
    </citation>
    <scope>NUCLEOTIDE SEQUENCE [GENOMIC DNA]</scope>
    <source>
        <strain>ATCC 26921 / CBS 392.92 / QM9414</strain>
    </source>
</reference>
<dbReference type="EC" id="2.7.11.13"/>
<dbReference type="EMBL" id="U10016">
    <property type="protein sequence ID" value="AAA97432.1"/>
    <property type="molecule type" value="Unassigned_DNA"/>
</dbReference>
<dbReference type="PIR" id="S61918">
    <property type="entry name" value="S61918"/>
</dbReference>
<dbReference type="SMR" id="Q99014"/>
<dbReference type="BRENDA" id="2.7.11.13">
    <property type="organism ID" value="6451"/>
</dbReference>
<dbReference type="GO" id="GO:0005524">
    <property type="term" value="F:ATP binding"/>
    <property type="evidence" value="ECO:0007669"/>
    <property type="project" value="UniProtKB-KW"/>
</dbReference>
<dbReference type="GO" id="GO:0004697">
    <property type="term" value="F:diacylglycerol-dependent serine/threonine kinase activity"/>
    <property type="evidence" value="ECO:0007669"/>
    <property type="project" value="UniProtKB-EC"/>
</dbReference>
<dbReference type="GO" id="GO:0106310">
    <property type="term" value="F:protein serine kinase activity"/>
    <property type="evidence" value="ECO:0007669"/>
    <property type="project" value="RHEA"/>
</dbReference>
<dbReference type="GO" id="GO:0008270">
    <property type="term" value="F:zinc ion binding"/>
    <property type="evidence" value="ECO:0007669"/>
    <property type="project" value="UniProtKB-KW"/>
</dbReference>
<dbReference type="GO" id="GO:0009272">
    <property type="term" value="P:fungal-type cell wall biogenesis"/>
    <property type="evidence" value="ECO:0007669"/>
    <property type="project" value="InterPro"/>
</dbReference>
<dbReference type="GO" id="GO:0007165">
    <property type="term" value="P:signal transduction"/>
    <property type="evidence" value="ECO:0007669"/>
    <property type="project" value="InterPro"/>
</dbReference>
<dbReference type="CDD" id="cd20822">
    <property type="entry name" value="C1_ScPKC1-like_rpt1"/>
    <property type="match status" value="1"/>
</dbReference>
<dbReference type="CDD" id="cd20823">
    <property type="entry name" value="C1_ScPKC1-like_rpt2"/>
    <property type="match status" value="1"/>
</dbReference>
<dbReference type="CDD" id="cd08689">
    <property type="entry name" value="C2_fungal_Pkc1p"/>
    <property type="match status" value="1"/>
</dbReference>
<dbReference type="CDD" id="cd11620">
    <property type="entry name" value="HR1_PKC-like_2_fungi"/>
    <property type="match status" value="1"/>
</dbReference>
<dbReference type="CDD" id="cd05570">
    <property type="entry name" value="STKc_PKC"/>
    <property type="match status" value="1"/>
</dbReference>
<dbReference type="FunFam" id="1.10.510.10:FF:000101">
    <property type="entry name" value="Protein kinase C"/>
    <property type="match status" value="1"/>
</dbReference>
<dbReference type="FunFam" id="3.30.200.20:FF:000103">
    <property type="entry name" value="Protein kinase C"/>
    <property type="match status" value="1"/>
</dbReference>
<dbReference type="FunFam" id="3.30.60.20:FF:000014">
    <property type="entry name" value="Protein kinase C"/>
    <property type="match status" value="1"/>
</dbReference>
<dbReference type="FunFam" id="3.30.60.20:FF:000034">
    <property type="entry name" value="Protein kinase C"/>
    <property type="match status" value="1"/>
</dbReference>
<dbReference type="Gene3D" id="3.30.60.20">
    <property type="match status" value="2"/>
</dbReference>
<dbReference type="Gene3D" id="1.10.287.160">
    <property type="entry name" value="HR1 repeat"/>
    <property type="match status" value="1"/>
</dbReference>
<dbReference type="Gene3D" id="3.30.200.20">
    <property type="entry name" value="Phosphorylase Kinase, domain 1"/>
    <property type="match status" value="1"/>
</dbReference>
<dbReference type="Gene3D" id="1.10.510.10">
    <property type="entry name" value="Transferase(Phosphotransferase) domain 1"/>
    <property type="match status" value="1"/>
</dbReference>
<dbReference type="InterPro" id="IPR000961">
    <property type="entry name" value="AGC-kinase_C"/>
</dbReference>
<dbReference type="InterPro" id="IPR046349">
    <property type="entry name" value="C1-like_sf"/>
</dbReference>
<dbReference type="InterPro" id="IPR000008">
    <property type="entry name" value="C2_dom"/>
</dbReference>
<dbReference type="InterPro" id="IPR035892">
    <property type="entry name" value="C2_domain_sf"/>
</dbReference>
<dbReference type="InterPro" id="IPR037778">
    <property type="entry name" value="C2_fungal_PKC"/>
</dbReference>
<dbReference type="InterPro" id="IPR011072">
    <property type="entry name" value="HR1_rho-bd"/>
</dbReference>
<dbReference type="InterPro" id="IPR036274">
    <property type="entry name" value="HR1_rpt_sf"/>
</dbReference>
<dbReference type="InterPro" id="IPR011009">
    <property type="entry name" value="Kinase-like_dom_sf"/>
</dbReference>
<dbReference type="InterPro" id="IPR002219">
    <property type="entry name" value="PE/DAG-bd"/>
</dbReference>
<dbReference type="InterPro" id="IPR037312">
    <property type="entry name" value="PKC-like_HR1"/>
</dbReference>
<dbReference type="InterPro" id="IPR017892">
    <property type="entry name" value="Pkinase_C"/>
</dbReference>
<dbReference type="InterPro" id="IPR000719">
    <property type="entry name" value="Prot_kinase_dom"/>
</dbReference>
<dbReference type="InterPro" id="IPR017441">
    <property type="entry name" value="Protein_kinase_ATP_BS"/>
</dbReference>
<dbReference type="InterPro" id="IPR008271">
    <property type="entry name" value="Ser/Thr_kinase_AS"/>
</dbReference>
<dbReference type="PANTHER" id="PTHR24351">
    <property type="entry name" value="RIBOSOMAL PROTEIN S6 KINASE"/>
    <property type="match status" value="1"/>
</dbReference>
<dbReference type="Pfam" id="PF00130">
    <property type="entry name" value="C1_1"/>
    <property type="match status" value="2"/>
</dbReference>
<dbReference type="Pfam" id="PF02185">
    <property type="entry name" value="HR1"/>
    <property type="match status" value="2"/>
</dbReference>
<dbReference type="Pfam" id="PF00069">
    <property type="entry name" value="Pkinase"/>
    <property type="match status" value="1"/>
</dbReference>
<dbReference type="Pfam" id="PF00433">
    <property type="entry name" value="Pkinase_C"/>
    <property type="match status" value="1"/>
</dbReference>
<dbReference type="SMART" id="SM00109">
    <property type="entry name" value="C1"/>
    <property type="match status" value="2"/>
</dbReference>
<dbReference type="SMART" id="SM00239">
    <property type="entry name" value="C2"/>
    <property type="match status" value="1"/>
</dbReference>
<dbReference type="SMART" id="SM00742">
    <property type="entry name" value="Hr1"/>
    <property type="match status" value="2"/>
</dbReference>
<dbReference type="SMART" id="SM00133">
    <property type="entry name" value="S_TK_X"/>
    <property type="match status" value="1"/>
</dbReference>
<dbReference type="SMART" id="SM00220">
    <property type="entry name" value="S_TKc"/>
    <property type="match status" value="1"/>
</dbReference>
<dbReference type="SUPFAM" id="SSF49562">
    <property type="entry name" value="C2 domain (Calcium/lipid-binding domain, CaLB)"/>
    <property type="match status" value="1"/>
</dbReference>
<dbReference type="SUPFAM" id="SSF57889">
    <property type="entry name" value="Cysteine-rich domain"/>
    <property type="match status" value="2"/>
</dbReference>
<dbReference type="SUPFAM" id="SSF46585">
    <property type="entry name" value="HR1 repeat"/>
    <property type="match status" value="1"/>
</dbReference>
<dbReference type="SUPFAM" id="SSF56112">
    <property type="entry name" value="Protein kinase-like (PK-like)"/>
    <property type="match status" value="1"/>
</dbReference>
<dbReference type="PROSITE" id="PS51285">
    <property type="entry name" value="AGC_KINASE_CTER"/>
    <property type="match status" value="1"/>
</dbReference>
<dbReference type="PROSITE" id="PS50004">
    <property type="entry name" value="C2"/>
    <property type="match status" value="1"/>
</dbReference>
<dbReference type="PROSITE" id="PS00107">
    <property type="entry name" value="PROTEIN_KINASE_ATP"/>
    <property type="match status" value="1"/>
</dbReference>
<dbReference type="PROSITE" id="PS50011">
    <property type="entry name" value="PROTEIN_KINASE_DOM"/>
    <property type="match status" value="1"/>
</dbReference>
<dbReference type="PROSITE" id="PS00108">
    <property type="entry name" value="PROTEIN_KINASE_ST"/>
    <property type="match status" value="1"/>
</dbReference>
<dbReference type="PROSITE" id="PS51860">
    <property type="entry name" value="REM_1"/>
    <property type="match status" value="2"/>
</dbReference>
<dbReference type="PROSITE" id="PS00479">
    <property type="entry name" value="ZF_DAG_PE_1"/>
    <property type="match status" value="2"/>
</dbReference>
<dbReference type="PROSITE" id="PS50081">
    <property type="entry name" value="ZF_DAG_PE_2"/>
    <property type="match status" value="2"/>
</dbReference>
<accession>Q99014</accession>
<organism>
    <name type="scientific">Hypocrea jecorina</name>
    <name type="common">Trichoderma reesei</name>
    <dbReference type="NCBI Taxonomy" id="51453"/>
    <lineage>
        <taxon>Eukaryota</taxon>
        <taxon>Fungi</taxon>
        <taxon>Dikarya</taxon>
        <taxon>Ascomycota</taxon>
        <taxon>Pezizomycotina</taxon>
        <taxon>Sordariomycetes</taxon>
        <taxon>Hypocreomycetidae</taxon>
        <taxon>Hypocreales</taxon>
        <taxon>Hypocreaceae</taxon>
        <taxon>Trichoderma</taxon>
    </lineage>
</organism>
<comment type="catalytic activity">
    <reaction>
        <text>L-seryl-[protein] + ATP = O-phospho-L-seryl-[protein] + ADP + H(+)</text>
        <dbReference type="Rhea" id="RHEA:17989"/>
        <dbReference type="Rhea" id="RHEA-COMP:9863"/>
        <dbReference type="Rhea" id="RHEA-COMP:11604"/>
        <dbReference type="ChEBI" id="CHEBI:15378"/>
        <dbReference type="ChEBI" id="CHEBI:29999"/>
        <dbReference type="ChEBI" id="CHEBI:30616"/>
        <dbReference type="ChEBI" id="CHEBI:83421"/>
        <dbReference type="ChEBI" id="CHEBI:456216"/>
        <dbReference type="EC" id="2.7.11.13"/>
    </reaction>
</comment>
<comment type="catalytic activity">
    <reaction>
        <text>L-threonyl-[protein] + ATP = O-phospho-L-threonyl-[protein] + ADP + H(+)</text>
        <dbReference type="Rhea" id="RHEA:46608"/>
        <dbReference type="Rhea" id="RHEA-COMP:11060"/>
        <dbReference type="Rhea" id="RHEA-COMP:11605"/>
        <dbReference type="ChEBI" id="CHEBI:15378"/>
        <dbReference type="ChEBI" id="CHEBI:30013"/>
        <dbReference type="ChEBI" id="CHEBI:30616"/>
        <dbReference type="ChEBI" id="CHEBI:61977"/>
        <dbReference type="ChEBI" id="CHEBI:456216"/>
        <dbReference type="EC" id="2.7.11.13"/>
    </reaction>
</comment>
<comment type="activity regulation">
    <text>Stimulated about twofold by phospholipids or phorbol esters.</text>
</comment>
<comment type="similarity">
    <text evidence="8">Belongs to the protein kinase superfamily. AGC Ser/Thr protein kinase family. PKC subfamily.</text>
</comment>